<name>DAPDH_CORGL</name>
<protein>
    <recommendedName>
        <fullName>Meso-diaminopimelate D-dehydrogenase</fullName>
        <shortName>DAPDH</shortName>
        <shortName>Meso-DAP dehydrogenase</shortName>
        <ecNumber>1.4.1.16</ecNumber>
    </recommendedName>
</protein>
<sequence length="320" mass="35199">MTNIRVAIVGYGNLGRSVEKLIAKQPDMDLVGIFSRRATLDTKTPVFDVADVDKHADDVDVLFLCMGSATDIPEQAPKFAQFACTVDTYDNHRDIPRHRQVMNEAATAAGNVALVSTGWDPGMFSINRVYAAAVLAEHQQHTFWGPGLSQGHSDALRRIPGVQKAVQYTLPSEDALEKARRGEAGDLTGKQTHKRQCFVVADAADHERIENDIRTMPDYFVGYEVEVNFIDEATFDSEHTGMPHGGHVITTGDTGGFNHTVEYILKLDRNPDFTASSQIAFGRAAHRMKQQGQSGAFTVLEVAPYLLSPENLDDLIARDV</sequence>
<proteinExistence type="evidence at protein level"/>
<accession>P04964</accession>
<dbReference type="EC" id="1.4.1.16"/>
<dbReference type="EMBL" id="Y00151">
    <property type="protein sequence ID" value="CAA68346.1"/>
    <property type="molecule type" value="Genomic_DNA"/>
</dbReference>
<dbReference type="EMBL" id="BA000036">
    <property type="protein sequence ID" value="BAC00011.1"/>
    <property type="molecule type" value="Genomic_DNA"/>
</dbReference>
<dbReference type="EMBL" id="BX927155">
    <property type="protein sequence ID" value="CAF21279.1"/>
    <property type="molecule type" value="Genomic_DNA"/>
</dbReference>
<dbReference type="PIR" id="S07384">
    <property type="entry name" value="S07384"/>
</dbReference>
<dbReference type="RefSeq" id="NP_601818.2">
    <property type="nucleotide sequence ID" value="NC_003450.3"/>
</dbReference>
<dbReference type="RefSeq" id="WP_011015254.1">
    <property type="nucleotide sequence ID" value="NC_006958.1"/>
</dbReference>
<dbReference type="PDB" id="1DAP">
    <property type="method" value="X-ray"/>
    <property type="resolution" value="2.20 A"/>
    <property type="chains" value="A/B=1-320"/>
</dbReference>
<dbReference type="PDB" id="1F06">
    <property type="method" value="X-ray"/>
    <property type="resolution" value="2.10 A"/>
    <property type="chains" value="A/B=1-320"/>
</dbReference>
<dbReference type="PDB" id="2DAP">
    <property type="method" value="X-ray"/>
    <property type="resolution" value="2.20 A"/>
    <property type="chains" value="A=1-320"/>
</dbReference>
<dbReference type="PDB" id="3DAP">
    <property type="method" value="X-ray"/>
    <property type="resolution" value="2.20 A"/>
    <property type="chains" value="A/B=1-320"/>
</dbReference>
<dbReference type="PDB" id="5LOA">
    <property type="method" value="X-ray"/>
    <property type="resolution" value="1.84 A"/>
    <property type="chains" value="A/B=2-320"/>
</dbReference>
<dbReference type="PDB" id="5LOC">
    <property type="method" value="X-ray"/>
    <property type="resolution" value="2.04 A"/>
    <property type="chains" value="A/B=2-320"/>
</dbReference>
<dbReference type="PDBsum" id="1DAP"/>
<dbReference type="PDBsum" id="1F06"/>
<dbReference type="PDBsum" id="2DAP"/>
<dbReference type="PDBsum" id="3DAP"/>
<dbReference type="PDBsum" id="5LOA"/>
<dbReference type="PDBsum" id="5LOC"/>
<dbReference type="SMR" id="P04964"/>
<dbReference type="STRING" id="196627.cg2900"/>
<dbReference type="DrugBank" id="DB03590">
    <property type="generic name" value="2,6-Diaminopimelic Acid"/>
</dbReference>
<dbReference type="DrugBank" id="DB02892">
    <property type="generic name" value="L-2-Amino-6-Methylene-Pimelic Acid"/>
</dbReference>
<dbReference type="KEGG" id="cgb:cg2900"/>
<dbReference type="KEGG" id="cgl:Cgl2617"/>
<dbReference type="PATRIC" id="fig|196627.13.peg.2553"/>
<dbReference type="eggNOG" id="COG1748">
    <property type="taxonomic scope" value="Bacteria"/>
</dbReference>
<dbReference type="HOGENOM" id="CLU_055796_0_0_11"/>
<dbReference type="OrthoDB" id="9774191at2"/>
<dbReference type="BioCyc" id="CORYNE:G18NG-12233-MONOMER"/>
<dbReference type="BioCyc" id="MetaCyc:MONOMER-6621"/>
<dbReference type="BRENDA" id="1.4.1.16">
    <property type="organism ID" value="960"/>
</dbReference>
<dbReference type="UniPathway" id="UPA00034">
    <property type="reaction ID" value="UER00026"/>
</dbReference>
<dbReference type="EvolutionaryTrace" id="P04964"/>
<dbReference type="Proteomes" id="UP000000582">
    <property type="component" value="Chromosome"/>
</dbReference>
<dbReference type="Proteomes" id="UP000001009">
    <property type="component" value="Chromosome"/>
</dbReference>
<dbReference type="GO" id="GO:0047850">
    <property type="term" value="F:diaminopimelate dehydrogenase activity"/>
    <property type="evidence" value="ECO:0007669"/>
    <property type="project" value="UniProtKB-EC"/>
</dbReference>
<dbReference type="GO" id="GO:0019877">
    <property type="term" value="P:diaminopimelate biosynthetic process"/>
    <property type="evidence" value="ECO:0007669"/>
    <property type="project" value="UniProtKB-KW"/>
</dbReference>
<dbReference type="GO" id="GO:0009089">
    <property type="term" value="P:lysine biosynthetic process via diaminopimelate"/>
    <property type="evidence" value="ECO:0007669"/>
    <property type="project" value="UniProtKB-UniPathway"/>
</dbReference>
<dbReference type="CDD" id="cd02270">
    <property type="entry name" value="meso-DAPDH_N"/>
    <property type="match status" value="1"/>
</dbReference>
<dbReference type="Gene3D" id="3.30.360.10">
    <property type="entry name" value="Dihydrodipicolinate Reductase, domain 2"/>
    <property type="match status" value="1"/>
</dbReference>
<dbReference type="Gene3D" id="3.40.50.720">
    <property type="entry name" value="NAD(P)-binding Rossmann-like Domain"/>
    <property type="match status" value="1"/>
</dbReference>
<dbReference type="InterPro" id="IPR010190">
    <property type="entry name" value="Diaminopimelate_DH_Ddh"/>
</dbReference>
<dbReference type="InterPro" id="IPR032094">
    <property type="entry name" value="Meso-DAP_DH_C"/>
</dbReference>
<dbReference type="InterPro" id="IPR036291">
    <property type="entry name" value="NAD(P)-bd_dom_sf"/>
</dbReference>
<dbReference type="NCBIfam" id="TIGR01921">
    <property type="entry name" value="DAP-DH"/>
    <property type="match status" value="1"/>
</dbReference>
<dbReference type="Pfam" id="PF16654">
    <property type="entry name" value="DAPDH_C"/>
    <property type="match status" value="1"/>
</dbReference>
<dbReference type="PIRSF" id="PIRSF025648">
    <property type="entry name" value="DDH"/>
    <property type="match status" value="1"/>
</dbReference>
<dbReference type="SUPFAM" id="SSF55347">
    <property type="entry name" value="Glyceraldehyde-3-phosphate dehydrogenase-like, C-terminal domain"/>
    <property type="match status" value="1"/>
</dbReference>
<dbReference type="SUPFAM" id="SSF51735">
    <property type="entry name" value="NAD(P)-binding Rossmann-fold domains"/>
    <property type="match status" value="1"/>
</dbReference>
<keyword id="KW-0002">3D-structure</keyword>
<keyword id="KW-0028">Amino-acid biosynthesis</keyword>
<keyword id="KW-0220">Diaminopimelate biosynthesis</keyword>
<keyword id="KW-0457">Lysine biosynthesis</keyword>
<keyword id="KW-0521">NADP</keyword>
<keyword id="KW-0560">Oxidoreductase</keyword>
<keyword id="KW-1185">Reference proteome</keyword>
<organism>
    <name type="scientific">Corynebacterium glutamicum (strain ATCC 13032 / DSM 20300 / JCM 1318 / BCRC 11384 / CCUG 27702 / LMG 3730 / NBRC 12168 / NCIMB 10025 / NRRL B-2784 / 534)</name>
    <dbReference type="NCBI Taxonomy" id="196627"/>
    <lineage>
        <taxon>Bacteria</taxon>
        <taxon>Bacillati</taxon>
        <taxon>Actinomycetota</taxon>
        <taxon>Actinomycetes</taxon>
        <taxon>Mycobacteriales</taxon>
        <taxon>Corynebacteriaceae</taxon>
        <taxon>Corynebacterium</taxon>
    </lineage>
</organism>
<comment type="function">
    <text evidence="2 5">Catalyzes the reversible NADPH-dependent reductive amination of L-2-amino-6-oxopimelate, the acyclic form of L-tetrahydrodipicolinate, to generate the meso compound, D,L-2,6-diaminopimelate. Probably plays a role in lysine biosynthesis. Exhibits a high substrate specificity for meso-2,6-diaminopimelate, since L,L-2,6-diaminopimelate, D,D-2,6-diaminopimelate, L-glutamate, L-alanine, L-leucine, L-valine, L-aspartate, L-threonine, L-homoserine, L-methionine, L-lysine, L-serine, L-phenylalanine, L-tyrosine, L-tryptophan, L-ornithine, L-histidine, L-arginine, D-glutamate, and D-alanine are not substrates for the oxidative deamination reaction. Can use NAD(+) only poorly since the activity observed in the presence of NAD(+) is about 3% of that with NADP(+).</text>
</comment>
<comment type="catalytic activity">
    <reaction evidence="2 5">
        <text>meso-2,6-diaminopimelate + NADP(+) + H2O = (S)-2-amino-6-oxoheptanedioate + NH4(+) + NADPH + H(+)</text>
        <dbReference type="Rhea" id="RHEA:13561"/>
        <dbReference type="ChEBI" id="CHEBI:15377"/>
        <dbReference type="ChEBI" id="CHEBI:15378"/>
        <dbReference type="ChEBI" id="CHEBI:28938"/>
        <dbReference type="ChEBI" id="CHEBI:57783"/>
        <dbReference type="ChEBI" id="CHEBI:57791"/>
        <dbReference type="ChEBI" id="CHEBI:58349"/>
        <dbReference type="ChEBI" id="CHEBI:58556"/>
        <dbReference type="EC" id="1.4.1.16"/>
    </reaction>
</comment>
<comment type="activity regulation">
    <text evidence="5">L,L-2,6-diaminopimelate and D,D-2,6-diaminopimelate competitively inhibit the oxidative deamination of meso-2,6-diaminopimelate. The enzyme is also inhibited by L-cysteine, and by p-chloromercuribenzoate, iodoacetic acid and HgCl(2) in vitro.</text>
</comment>
<comment type="biophysicochemical properties">
    <kinetics>
        <KM evidence="5">3.1 mM for meso-2,6-diaminoheptanedioate</KM>
        <KM evidence="5">0.12 mM for NADP(+)</KM>
        <KM evidence="5">0.13 mM for NADPH</KM>
        <KM evidence="5">0.28 mM for L-2-amino-6-oxoheptanedioate</KM>
        <KM evidence="5">36 mM for ammonia</KM>
    </kinetics>
    <phDependence>
        <text evidence="5">Optimum pH is about 9.8 for the oxidative deamination of meso-diaminopimelate and 7.9 for the reductive amination of L-2-amino-6-oxopimelate.</text>
    </phDependence>
</comment>
<comment type="pathway">
    <text>Amino-acid biosynthesis; L-lysine biosynthesis via DAP pathway; DL-2,6-diaminopimelate from (S)-tetrahydrodipicolinate: step 1/1.</text>
</comment>
<comment type="subunit">
    <text evidence="1 2 3 4 5">Homodimer.</text>
</comment>
<comment type="domain">
    <text evidence="3">Is composed of three domains: a dinucleotide binding domain, a dimerization domain, and a substrate-binding domain.</text>
</comment>
<comment type="mass spectrometry" mass="35198.0" method="Electrospray" evidence="2"/>
<comment type="similarity">
    <text evidence="6">Belongs to the diaminopimelate dehydrogenase family.</text>
</comment>
<feature type="chain" id="PRO_0000079848" description="Meso-diaminopimelate D-dehydrogenase">
    <location>
        <begin position="1"/>
        <end position="320"/>
    </location>
</feature>
<feature type="binding site">
    <location>
        <begin position="11"/>
        <end position="14"/>
    </location>
    <ligand>
        <name>NADP(+)</name>
        <dbReference type="ChEBI" id="CHEBI:58349"/>
    </ligand>
</feature>
<feature type="binding site">
    <location>
        <begin position="35"/>
        <end position="37"/>
    </location>
    <ligand>
        <name>NADP(+)</name>
        <dbReference type="ChEBI" id="CHEBI:58349"/>
    </ligand>
</feature>
<feature type="binding site">
    <location>
        <begin position="65"/>
        <end position="68"/>
    </location>
    <ligand>
        <name>NADP(+)</name>
        <dbReference type="ChEBI" id="CHEBI:58349"/>
    </ligand>
</feature>
<feature type="binding site">
    <location>
        <begin position="88"/>
        <end position="90"/>
    </location>
    <ligand>
        <name>NADP(+)</name>
        <dbReference type="ChEBI" id="CHEBI:58349"/>
    </ligand>
</feature>
<feature type="binding site">
    <location>
        <position position="90"/>
    </location>
    <ligand>
        <name>substrate</name>
    </ligand>
</feature>
<feature type="binding site">
    <location>
        <begin position="117"/>
        <end position="121"/>
    </location>
    <ligand>
        <name>NADP(+)</name>
        <dbReference type="ChEBI" id="CHEBI:58349"/>
    </ligand>
</feature>
<feature type="binding site">
    <location>
        <position position="120"/>
    </location>
    <ligand>
        <name>substrate</name>
    </ligand>
</feature>
<feature type="binding site">
    <location>
        <position position="144"/>
    </location>
    <ligand>
        <name>substrate</name>
    </ligand>
</feature>
<feature type="binding site">
    <location>
        <begin position="150"/>
        <end position="151"/>
    </location>
    <ligand>
        <name>substrate</name>
    </ligand>
</feature>
<feature type="binding site">
    <location>
        <position position="169"/>
    </location>
    <ligand>
        <name>substrate</name>
    </ligand>
</feature>
<feature type="binding site">
    <location>
        <position position="195"/>
    </location>
    <ligand>
        <name>substrate</name>
    </ligand>
</feature>
<feature type="binding site">
    <location>
        <position position="244"/>
    </location>
    <ligand>
        <name>substrate</name>
    </ligand>
</feature>
<feature type="binding site">
    <location>
        <position position="270"/>
    </location>
    <ligand>
        <name>substrate</name>
    </ligand>
</feature>
<feature type="strand" evidence="9">
    <location>
        <begin position="4"/>
        <end position="9"/>
    </location>
</feature>
<feature type="helix" evidence="9">
    <location>
        <begin position="13"/>
        <end position="22"/>
    </location>
</feature>
<feature type="strand" evidence="9">
    <location>
        <begin position="28"/>
        <end position="38"/>
    </location>
</feature>
<feature type="strand" evidence="9">
    <location>
        <begin position="41"/>
        <end position="44"/>
    </location>
</feature>
<feature type="strand" evidence="9">
    <location>
        <begin position="46"/>
        <end position="48"/>
    </location>
</feature>
<feature type="helix" evidence="9">
    <location>
        <begin position="49"/>
        <end position="51"/>
    </location>
</feature>
<feature type="helix" evidence="9">
    <location>
        <begin position="52"/>
        <end position="55"/>
    </location>
</feature>
<feature type="helix" evidence="9">
    <location>
        <begin position="56"/>
        <end position="58"/>
    </location>
</feature>
<feature type="strand" evidence="9">
    <location>
        <begin position="60"/>
        <end position="64"/>
    </location>
</feature>
<feature type="turn" evidence="9">
    <location>
        <begin position="68"/>
        <end position="70"/>
    </location>
</feature>
<feature type="helix" evidence="9">
    <location>
        <begin position="71"/>
        <end position="79"/>
    </location>
</feature>
<feature type="turn" evidence="9">
    <location>
        <begin position="80"/>
        <end position="82"/>
    </location>
</feature>
<feature type="strand" evidence="9">
    <location>
        <begin position="83"/>
        <end position="86"/>
    </location>
</feature>
<feature type="helix" evidence="9">
    <location>
        <begin position="92"/>
        <end position="94"/>
    </location>
</feature>
<feature type="helix" evidence="9">
    <location>
        <begin position="95"/>
        <end position="109"/>
    </location>
</feature>
<feature type="strand" evidence="9">
    <location>
        <begin position="112"/>
        <end position="114"/>
    </location>
</feature>
<feature type="turn" evidence="9">
    <location>
        <begin position="119"/>
        <end position="122"/>
    </location>
</feature>
<feature type="helix" evidence="9">
    <location>
        <begin position="123"/>
        <end position="134"/>
    </location>
</feature>
<feature type="strand" evidence="7">
    <location>
        <begin position="135"/>
        <end position="137"/>
    </location>
</feature>
<feature type="strand" evidence="9">
    <location>
        <begin position="139"/>
        <end position="144"/>
    </location>
</feature>
<feature type="strand" evidence="9">
    <location>
        <begin position="146"/>
        <end position="148"/>
    </location>
</feature>
<feature type="helix" evidence="9">
    <location>
        <begin position="150"/>
        <end position="157"/>
    </location>
</feature>
<feature type="strand" evidence="9">
    <location>
        <begin position="163"/>
        <end position="171"/>
    </location>
</feature>
<feature type="helix" evidence="9">
    <location>
        <begin position="173"/>
        <end position="180"/>
    </location>
</feature>
<feature type="helix" evidence="9">
    <location>
        <begin position="189"/>
        <end position="192"/>
    </location>
</feature>
<feature type="strand" evidence="9">
    <location>
        <begin position="193"/>
        <end position="200"/>
    </location>
</feature>
<feature type="helix" evidence="9">
    <location>
        <begin position="203"/>
        <end position="205"/>
    </location>
</feature>
<feature type="helix" evidence="9">
    <location>
        <begin position="206"/>
        <end position="214"/>
    </location>
</feature>
<feature type="turn" evidence="9">
    <location>
        <begin position="217"/>
        <end position="222"/>
    </location>
</feature>
<feature type="strand" evidence="9">
    <location>
        <begin position="225"/>
        <end position="229"/>
    </location>
</feature>
<feature type="helix" evidence="9">
    <location>
        <begin position="232"/>
        <end position="238"/>
    </location>
</feature>
<feature type="strand" evidence="8">
    <location>
        <begin position="239"/>
        <end position="242"/>
    </location>
</feature>
<feature type="strand" evidence="9">
    <location>
        <begin position="244"/>
        <end position="256"/>
    </location>
</feature>
<feature type="strand" evidence="9">
    <location>
        <begin position="258"/>
        <end position="269"/>
    </location>
</feature>
<feature type="helix" evidence="9">
    <location>
        <begin position="270"/>
        <end position="290"/>
    </location>
</feature>
<feature type="strand" evidence="9">
    <location>
        <begin position="295"/>
        <end position="297"/>
    </location>
</feature>
<feature type="helix" evidence="9">
    <location>
        <begin position="299"/>
        <end position="301"/>
    </location>
</feature>
<feature type="helix" evidence="9">
    <location>
        <begin position="304"/>
        <end position="307"/>
    </location>
</feature>
<feature type="helix" evidence="9">
    <location>
        <begin position="312"/>
        <end position="319"/>
    </location>
</feature>
<reference key="1">
    <citation type="journal article" date="1987" name="Nucleic Acids Res.">
        <title>Nucleotide sequence of the meso-diaminopimelate D-dehydrogenase gene from Corynebacterium glutamicum.</title>
        <authorList>
            <person name="Ishino S."/>
            <person name="Mizukami T."/>
            <person name="Yamaguchi K."/>
            <person name="Katsumata R."/>
            <person name="Araki K."/>
        </authorList>
    </citation>
    <scope>NUCLEOTIDE SEQUENCE [GENOMIC DNA]</scope>
    <source>
        <strain>KY 10755</strain>
    </source>
</reference>
<reference key="2">
    <citation type="journal article" date="2003" name="Appl. Microbiol. Biotechnol.">
        <title>The Corynebacterium glutamicum genome: features and impacts on biotechnological processes.</title>
        <authorList>
            <person name="Ikeda M."/>
            <person name="Nakagawa S."/>
        </authorList>
    </citation>
    <scope>NUCLEOTIDE SEQUENCE [LARGE SCALE GENOMIC DNA]</scope>
    <source>
        <strain>ATCC 13032 / DSM 20300 / JCM 1318 / BCRC 11384 / CCUG 27702 / LMG 3730 / NBRC 12168 / NCIMB 10025 / NRRL B-2784 / 534</strain>
    </source>
</reference>
<reference key="3">
    <citation type="journal article" date="2003" name="J. Biotechnol.">
        <title>The complete Corynebacterium glutamicum ATCC 13032 genome sequence and its impact on the production of L-aspartate-derived amino acids and vitamins.</title>
        <authorList>
            <person name="Kalinowski J."/>
            <person name="Bathe B."/>
            <person name="Bartels D."/>
            <person name="Bischoff N."/>
            <person name="Bott M."/>
            <person name="Burkovski A."/>
            <person name="Dusch N."/>
            <person name="Eggeling L."/>
            <person name="Eikmanns B.J."/>
            <person name="Gaigalat L."/>
            <person name="Goesmann A."/>
            <person name="Hartmann M."/>
            <person name="Huthmacher K."/>
            <person name="Kraemer R."/>
            <person name="Linke B."/>
            <person name="McHardy A.C."/>
            <person name="Meyer F."/>
            <person name="Moeckel B."/>
            <person name="Pfefferle W."/>
            <person name="Puehler A."/>
            <person name="Rey D.A."/>
            <person name="Rueckert C."/>
            <person name="Rupp O."/>
            <person name="Sahm H."/>
            <person name="Wendisch V.F."/>
            <person name="Wiegraebe I."/>
            <person name="Tauch A."/>
        </authorList>
    </citation>
    <scope>NUCLEOTIDE SEQUENCE [LARGE SCALE GENOMIC DNA]</scope>
    <source>
        <strain>ATCC 13032 / DSM 20300 / JCM 1318 / BCRC 11384 / CCUG 27702 / LMG 3730 / NBRC 12168 / NCIMB 10025 / NRRL B-2784 / 534</strain>
    </source>
</reference>
<reference key="4">
    <citation type="journal article" date="1986" name="Agric. Biol. Chem.">
        <title>Characterization of meso-diaminopimelate dehydrogenase from Corynebacterium glutamicum.</title>
        <authorList>
            <person name="Misono H."/>
            <person name="Ogasawara M."/>
            <person name="Nagasaki S."/>
        </authorList>
    </citation>
    <scope>FUNCTION</scope>
    <scope>CATALYTIC ACTIVITY</scope>
    <scope>SUBSTRATE SPECIFICITY</scope>
    <scope>BIOPHYSICOCHEMICAL PROPERTIES</scope>
    <scope>ACTIVITY REGULATION</scope>
    <scope>SUBUNIT</scope>
    <source>
        <strain>ATCC 13032 / DSM 20300 / JCM 1318 / BCRC 11384 / CCUG 27702 / LMG 3730 / NBRC 12168 / NCIMB 10025 / NRRL B-2784 / 534</strain>
    </source>
</reference>
<reference key="5">
    <citation type="journal article" date="1996" name="Proteins">
        <title>Expression, purification, and crystallization of meso-diaminopimelate dehydrogenase from Corynebacterium glutamicum.</title>
        <authorList>
            <person name="Reddy S.G."/>
            <person name="Scapin G."/>
            <person name="Blanchard J.S."/>
        </authorList>
    </citation>
    <scope>FUNCTION</scope>
    <scope>CATALYTIC ACTIVITY</scope>
    <scope>CRYSTALLIZATION</scope>
    <scope>MASS SPECTROMETRY</scope>
    <scope>SUBUNIT</scope>
    <source>
        <strain>ATCC 13032 / DSM 20300 / JCM 1318 / BCRC 11384 / CCUG 27702 / LMG 3730 / NBRC 12168 / NCIMB 10025 / NRRL B-2784 / 534</strain>
    </source>
</reference>
<reference key="6">
    <citation type="journal article" date="1996" name="Biochemistry">
        <title>Three-dimensional structure of meso-diaminopimelic acid dehydrogenase from Corynebacterium glutamicum.</title>
        <authorList>
            <person name="Scapin G."/>
            <person name="Reddy S.G."/>
            <person name="Blanchard J.S."/>
        </authorList>
    </citation>
    <scope>X-RAY CRYSTALLOGRAPHY (2.2 ANGSTROMS) IN COMPLEX WITH NADP(+)</scope>
    <scope>DOMAIN</scope>
    <scope>SUBUNIT</scope>
    <source>
        <strain>ATCC 13032 / DSM 20300 / JCM 1318 / BCRC 11384 / CCUG 27702 / LMG 3730 / NBRC 12168 / NCIMB 10025 / NRRL B-2784 / 534</strain>
    </source>
</reference>
<reference key="7">
    <citation type="journal article" date="1998" name="Biochemistry">
        <title>Substrate and inhibitor binding sites in Corynebacterium glutamicum diaminopimelate dehydrogenase.</title>
        <authorList>
            <person name="Scapin G."/>
            <person name="Cirilli M."/>
            <person name="Reddy S.G."/>
            <person name="Gao Y."/>
            <person name="Vederas J.C."/>
            <person name="Blanchard J.S."/>
        </authorList>
    </citation>
    <scope>X-RAY CRYSTALLOGRAPHY (2.2 ANGSTROMS) IN COMPLEXES WITH MESO-2,6-DIAMINOPIMELATE; NADP(+) AND AN ISOXAZOLINE INHIBITOR</scope>
    <scope>SUBUNIT</scope>
    <source>
        <strain>ATCC 13032 / DSM 20300 / JCM 1318 / BCRC 11384 / CCUG 27702 / LMG 3730 / NBRC 12168 / NCIMB 10025 / NRRL B-2784 / 534</strain>
    </source>
</reference>
<reference key="8">
    <citation type="journal article" date="2000" name="Protein Sci.">
        <title>The three-dimensional structure of the ternary complex of Corynebacterium glutamicum diaminopimelate dehydrogenase-NADPH-L-2-amino-6-methylene-pimelate.</title>
        <authorList>
            <person name="Cirilli M."/>
            <person name="Scapin G."/>
            <person name="Sutherland A."/>
            <person name="Vederas J.C."/>
            <person name="Blanchard J.S."/>
        </authorList>
    </citation>
    <scope>X-RAY CRYSTALLOGRAPHY (2.10 ANGSTROMS) IN COMPLEX WITH NADP(+) AND SUBSTRATE ANALOG INHIBITOR</scope>
    <scope>SUBUNIT</scope>
    <source>
        <strain>ATCC 13032 / DSM 20300 / JCM 1318 / BCRC 11384 / CCUG 27702 / LMG 3730 / NBRC 12168 / NCIMB 10025 / NRRL B-2784 / 534</strain>
    </source>
</reference>
<evidence type="ECO:0000269" key="1">
    <source>
    </source>
</evidence>
<evidence type="ECO:0000269" key="2">
    <source>
    </source>
</evidence>
<evidence type="ECO:0000269" key="3">
    <source>
    </source>
</evidence>
<evidence type="ECO:0000269" key="4">
    <source>
    </source>
</evidence>
<evidence type="ECO:0000269" key="5">
    <source ref="4"/>
</evidence>
<evidence type="ECO:0000305" key="6"/>
<evidence type="ECO:0007829" key="7">
    <source>
        <dbReference type="PDB" id="1DAP"/>
    </source>
</evidence>
<evidence type="ECO:0007829" key="8">
    <source>
        <dbReference type="PDB" id="3DAP"/>
    </source>
</evidence>
<evidence type="ECO:0007829" key="9">
    <source>
        <dbReference type="PDB" id="5LOA"/>
    </source>
</evidence>
<gene>
    <name type="primary">ddh</name>
    <name type="ordered locus">Cgl2617</name>
    <name type="ordered locus">cg2900</name>
</gene>